<evidence type="ECO:0000255" key="1">
    <source>
        <dbReference type="HAMAP-Rule" id="MF_00719"/>
    </source>
</evidence>
<protein>
    <recommendedName>
        <fullName evidence="1">Adenosylcobinamide-GDP ribazoletransferase</fullName>
        <ecNumber evidence="1">2.7.8.26</ecNumber>
    </recommendedName>
    <alternativeName>
        <fullName evidence="1">Cobalamin synthase</fullName>
    </alternativeName>
    <alternativeName>
        <fullName evidence="1">Cobalamin-5'-phosphate synthase</fullName>
    </alternativeName>
</protein>
<organism>
    <name type="scientific">Salmonella arizonae (strain ATCC BAA-731 / CDC346-86 / RSK2980)</name>
    <dbReference type="NCBI Taxonomy" id="41514"/>
    <lineage>
        <taxon>Bacteria</taxon>
        <taxon>Pseudomonadati</taxon>
        <taxon>Pseudomonadota</taxon>
        <taxon>Gammaproteobacteria</taxon>
        <taxon>Enterobacterales</taxon>
        <taxon>Enterobacteriaceae</taxon>
        <taxon>Salmonella</taxon>
    </lineage>
</organism>
<comment type="function">
    <text evidence="1">Joins adenosylcobinamide-GDP and alpha-ribazole to generate adenosylcobalamin (Ado-cobalamin). Also synthesizes adenosylcobalamin 5'-phosphate from adenosylcobinamide-GDP and alpha-ribazole 5'-phosphate.</text>
</comment>
<comment type="catalytic activity">
    <reaction evidence="1">
        <text>alpha-ribazole + adenosylcob(III)inamide-GDP = adenosylcob(III)alamin + GMP + H(+)</text>
        <dbReference type="Rhea" id="RHEA:16049"/>
        <dbReference type="ChEBI" id="CHEBI:10329"/>
        <dbReference type="ChEBI" id="CHEBI:15378"/>
        <dbReference type="ChEBI" id="CHEBI:18408"/>
        <dbReference type="ChEBI" id="CHEBI:58115"/>
        <dbReference type="ChEBI" id="CHEBI:60487"/>
        <dbReference type="EC" id="2.7.8.26"/>
    </reaction>
</comment>
<comment type="catalytic activity">
    <reaction evidence="1">
        <text>alpha-ribazole 5'-phosphate + adenosylcob(III)inamide-GDP = adenosylcob(III)alamin 5'-phosphate + GMP + H(+)</text>
        <dbReference type="Rhea" id="RHEA:23560"/>
        <dbReference type="ChEBI" id="CHEBI:15378"/>
        <dbReference type="ChEBI" id="CHEBI:57918"/>
        <dbReference type="ChEBI" id="CHEBI:58115"/>
        <dbReference type="ChEBI" id="CHEBI:60487"/>
        <dbReference type="ChEBI" id="CHEBI:60493"/>
        <dbReference type="EC" id="2.7.8.26"/>
    </reaction>
</comment>
<comment type="cofactor">
    <cofactor evidence="1">
        <name>Mg(2+)</name>
        <dbReference type="ChEBI" id="CHEBI:18420"/>
    </cofactor>
</comment>
<comment type="pathway">
    <text evidence="1">Cofactor biosynthesis; adenosylcobalamin biosynthesis; adenosylcobalamin from cob(II)yrinate a,c-diamide: step 7/7.</text>
</comment>
<comment type="subcellular location">
    <subcellularLocation>
        <location evidence="1">Cell inner membrane</location>
        <topology evidence="1">Multi-pass membrane protein</topology>
    </subcellularLocation>
</comment>
<comment type="similarity">
    <text evidence="1">Belongs to the CobS family.</text>
</comment>
<gene>
    <name evidence="1" type="primary">cobS</name>
    <name type="ordered locus">SARI_00871</name>
</gene>
<dbReference type="EC" id="2.7.8.26" evidence="1"/>
<dbReference type="EMBL" id="CP000880">
    <property type="protein sequence ID" value="ABX20790.1"/>
    <property type="molecule type" value="Genomic_DNA"/>
</dbReference>
<dbReference type="STRING" id="41514.SARI_00871"/>
<dbReference type="KEGG" id="ses:SARI_00871"/>
<dbReference type="HOGENOM" id="CLU_057426_1_2_6"/>
<dbReference type="UniPathway" id="UPA00148">
    <property type="reaction ID" value="UER00238"/>
</dbReference>
<dbReference type="Proteomes" id="UP000002084">
    <property type="component" value="Chromosome"/>
</dbReference>
<dbReference type="GO" id="GO:0005886">
    <property type="term" value="C:plasma membrane"/>
    <property type="evidence" value="ECO:0007669"/>
    <property type="project" value="UniProtKB-SubCell"/>
</dbReference>
<dbReference type="GO" id="GO:0051073">
    <property type="term" value="F:adenosylcobinamide-GDP ribazoletransferase activity"/>
    <property type="evidence" value="ECO:0007669"/>
    <property type="project" value="UniProtKB-UniRule"/>
</dbReference>
<dbReference type="GO" id="GO:0008818">
    <property type="term" value="F:cobalamin 5'-phosphate synthase activity"/>
    <property type="evidence" value="ECO:0007669"/>
    <property type="project" value="UniProtKB-UniRule"/>
</dbReference>
<dbReference type="GO" id="GO:0009236">
    <property type="term" value="P:cobalamin biosynthetic process"/>
    <property type="evidence" value="ECO:0007669"/>
    <property type="project" value="UniProtKB-UniRule"/>
</dbReference>
<dbReference type="HAMAP" id="MF_00719">
    <property type="entry name" value="CobS"/>
    <property type="match status" value="1"/>
</dbReference>
<dbReference type="InterPro" id="IPR003805">
    <property type="entry name" value="CobS"/>
</dbReference>
<dbReference type="NCBIfam" id="TIGR00317">
    <property type="entry name" value="cobS"/>
    <property type="match status" value="1"/>
</dbReference>
<dbReference type="PANTHER" id="PTHR34148">
    <property type="entry name" value="ADENOSYLCOBINAMIDE-GDP RIBAZOLETRANSFERASE"/>
    <property type="match status" value="1"/>
</dbReference>
<dbReference type="PANTHER" id="PTHR34148:SF1">
    <property type="entry name" value="ADENOSYLCOBINAMIDE-GDP RIBAZOLETRANSFERASE"/>
    <property type="match status" value="1"/>
</dbReference>
<dbReference type="Pfam" id="PF02654">
    <property type="entry name" value="CobS"/>
    <property type="match status" value="1"/>
</dbReference>
<reference key="1">
    <citation type="submission" date="2007-11" db="EMBL/GenBank/DDBJ databases">
        <authorList>
            <consortium name="The Salmonella enterica serovar Arizonae Genome Sequencing Project"/>
            <person name="McClelland M."/>
            <person name="Sanderson E.K."/>
            <person name="Porwollik S."/>
            <person name="Spieth J."/>
            <person name="Clifton W.S."/>
            <person name="Fulton R."/>
            <person name="Chunyan W."/>
            <person name="Wollam A."/>
            <person name="Shah N."/>
            <person name="Pepin K."/>
            <person name="Bhonagiri V."/>
            <person name="Nash W."/>
            <person name="Johnson M."/>
            <person name="Thiruvilangam P."/>
            <person name="Wilson R."/>
        </authorList>
    </citation>
    <scope>NUCLEOTIDE SEQUENCE [LARGE SCALE GENOMIC DNA]</scope>
    <source>
        <strain>ATCC BAA-731 / CDC346-86 / RSK2980</strain>
    </source>
</reference>
<proteinExistence type="inferred from homology"/>
<accession>A9MLS7</accession>
<sequence length="247" mass="26171">MSKLFWATLSFISRLPVPSRWAQGLDFEQYSRGIVMFPLIGAILGGLSGLIFILLQPWCGIPLAALFCILALALLTGGFHLDGLADTCDGIFSARRRERMLEIMRDSRLGTHGGLALIFVLLAKILVVSELALRGTPVLAALAAACAAGRGSAALLMYRHRYAREEGLGNVFIGKVSGRQTCVTLGLAAIITTVLLPGMQGLAAIVITLAAIFILGQLLKRTLGGQTGDTLGAAIELGELIFLLALL</sequence>
<keyword id="KW-0997">Cell inner membrane</keyword>
<keyword id="KW-1003">Cell membrane</keyword>
<keyword id="KW-0169">Cobalamin biosynthesis</keyword>
<keyword id="KW-0460">Magnesium</keyword>
<keyword id="KW-0472">Membrane</keyword>
<keyword id="KW-1185">Reference proteome</keyword>
<keyword id="KW-0808">Transferase</keyword>
<keyword id="KW-0812">Transmembrane</keyword>
<keyword id="KW-1133">Transmembrane helix</keyword>
<name>COBS_SALAR</name>
<feature type="chain" id="PRO_1000083266" description="Adenosylcobinamide-GDP ribazoletransferase">
    <location>
        <begin position="1"/>
        <end position="247"/>
    </location>
</feature>
<feature type="transmembrane region" description="Helical" evidence="1">
    <location>
        <begin position="34"/>
        <end position="54"/>
    </location>
</feature>
<feature type="transmembrane region" description="Helical" evidence="1">
    <location>
        <begin position="59"/>
        <end position="79"/>
    </location>
</feature>
<feature type="transmembrane region" description="Helical" evidence="1">
    <location>
        <begin position="113"/>
        <end position="133"/>
    </location>
</feature>
<feature type="transmembrane region" description="Helical" evidence="1">
    <location>
        <begin position="138"/>
        <end position="158"/>
    </location>
</feature>
<feature type="transmembrane region" description="Helical" evidence="1">
    <location>
        <begin position="194"/>
        <end position="214"/>
    </location>
</feature>